<gene>
    <name type="primary">23</name>
</gene>
<comment type="similarity">
    <text evidence="1">Belongs to the herpesviridae BTRF1 family.</text>
</comment>
<organismHost>
    <name type="scientific">Connochaetes taurinus</name>
    <name type="common">Blue wildebeest</name>
    <dbReference type="NCBI Taxonomy" id="9927"/>
</organismHost>
<name>VG23_ALHV1</name>
<evidence type="ECO:0000305" key="1"/>
<proteinExistence type="inferred from homology"/>
<reference key="1">
    <citation type="journal article" date="1997" name="J. Virol.">
        <title>Primary structure of the alcelaphine herpesvirus 1 genome.</title>
        <authorList>
            <person name="Ensser A."/>
            <person name="Pflanz R."/>
            <person name="Fleckenstein B."/>
        </authorList>
    </citation>
    <scope>NUCLEOTIDE SEQUENCE [LARGE SCALE GENOMIC DNA]</scope>
</reference>
<protein>
    <recommendedName>
        <fullName>Uncharacterized gene 23 protein</fullName>
    </recommendedName>
</protein>
<organism>
    <name type="scientific">Alcelaphine herpesvirus 1 (strain C500)</name>
    <name type="common">AlHV-1</name>
    <name type="synonym">Malignant catarrhal fever virus</name>
    <dbReference type="NCBI Taxonomy" id="654901"/>
    <lineage>
        <taxon>Viruses</taxon>
        <taxon>Duplodnaviria</taxon>
        <taxon>Heunggongvirae</taxon>
        <taxon>Peploviricota</taxon>
        <taxon>Herviviricetes</taxon>
        <taxon>Herpesvirales</taxon>
        <taxon>Orthoherpesviridae</taxon>
        <taxon>Gammaherpesvirinae</taxon>
        <taxon>Macavirus</taxon>
        <taxon>Macavirus alcelaphinegamma1</taxon>
    </lineage>
</organism>
<sequence length="401" mass="44541">MEQGLKISTPNAKLVRGAVLLPSDKYVFHLIQSRTLCMALSMPGEYLPAPVLFDRFEGGSSGECSLHSRQNVCLYLVRILLSKHPYVLNSQLLVGYQHRQEAVVLYKQLLVKTKDFGISEIKLPCSIVVGPNPMSAEGTVQAERELPSCELVITSEFKTVWINESANQEKEFSPHDAISIPLAPGTPSKPIIKQPPFLPISKETAILHAQLFYAAGAGFPPIHNCPASAFTTLAVMCKSHNSINLVPELEIKPRQLLLLKHVLLTRMGLENCLQDFIQAYAERLPPLADEQVKYFEKVLGTAKDRAEDIIFILNSVGATSFTNRICSSNTDPMLTKAMQKYFLMFPPADPINALPFAVDIISIICQGANFNTVVLFVQRYIKIQERAAKTNQIKMFALLSI</sequence>
<keyword id="KW-1185">Reference proteome</keyword>
<accession>O36373</accession>
<feature type="chain" id="PRO_0000405721" description="Uncharacterized gene 23 protein">
    <location>
        <begin position="1"/>
        <end position="401"/>
    </location>
</feature>
<dbReference type="EMBL" id="AF005370">
    <property type="protein sequence ID" value="AAC58070.1"/>
    <property type="molecule type" value="Genomic_DNA"/>
</dbReference>
<dbReference type="PIR" id="T03118">
    <property type="entry name" value="T03118"/>
</dbReference>
<dbReference type="RefSeq" id="NP_065522.1">
    <property type="nucleotide sequence ID" value="NC_002531.1"/>
</dbReference>
<dbReference type="KEGG" id="vg:911739"/>
<dbReference type="Proteomes" id="UP000000941">
    <property type="component" value="Segment"/>
</dbReference>
<dbReference type="InterPro" id="IPR006772">
    <property type="entry name" value="Herpes_BTRF1"/>
</dbReference>
<dbReference type="Pfam" id="PF04682">
    <property type="entry name" value="Herpes_BTRF1"/>
    <property type="match status" value="1"/>
</dbReference>